<name>EED_BOVIN</name>
<comment type="function">
    <text evidence="1">Polycomb group (PcG) protein. Component of the PRC2/EED-EZH2 complex, which methylates 'Lys-9' and 'Lys-27' of histone H3, leading to transcriptional repression of the affected target gene. Also recognizes 'Lys-26' trimethylated histone H1 with the effect of inhibiting PRC2 complex methyltransferase activity on nucleosomal histone H3 'Lys-27', whereas H3 'Lys-27' recognition has the opposite effect, enabling the propagation of this repressive mark (By similarity). The PRC2/EED-EZH2 complex may also serve as a recruiting platform for DNA methyltransferases, thereby linking two epigenetic repression systems (By similarity).</text>
</comment>
<comment type="subunit">
    <text evidence="1">Component of the PRC2/EED-EZH2 complex, which includes EED, EZH2, SUZ12, RBBP4 and RBBP7 and possibly AEBP2 (By similarity). The minimum components required for methyltransferase activity of the PRC2/EED-EZH2 complex are EED, EZH2 and SUZ12. Component of the PRC2/EED-EZH1 complex, which includes EED, EZH1, SUZ12, RBBP4 and AEBP2 (By similarity). The PRC2 complex may also interact with DNMT1, DNMT3A, DNMT3B and PHF1 via the EZH2 subunit and with SIRT1 via the SUZ12 subunit (By similarity). Interacts with HDAC, HDAC2, histone H1, KMT2A/MLL1 and YY1 (By similarity). May interact with ITGA4, ITGAE and ITGB7 (By similarity). Interacts with CDYL. Interacts with BMAL1 (By similarity).</text>
</comment>
<comment type="subcellular location">
    <subcellularLocation>
        <location evidence="1">Nucleus</location>
    </subcellularLocation>
</comment>
<comment type="domain">
    <text evidence="1">The WD repeat domain mediates recognition of trimethylated histone peptides at the consensus sequence Ala-Arg-Lys-Ser. This is achieved through an aromatic cage encircling the methyllysine, and involving Phe-97, Tyr-148 and Tyr-365 (By similarity).</text>
</comment>
<comment type="PTM">
    <text evidence="1">Methylated. Binding to histone H1 'Lys-26' promotes mono-, di-, and trimethylation of internal lysines (By similarity).</text>
</comment>
<comment type="similarity">
    <text evidence="5">Belongs to the WD repeat ESC family.</text>
</comment>
<dbReference type="EMBL" id="BC103217">
    <property type="protein sequence ID" value="AAI03218.1"/>
    <property type="molecule type" value="mRNA"/>
</dbReference>
<dbReference type="RefSeq" id="NP_001035584.1">
    <property type="nucleotide sequence ID" value="NM_001040494.2"/>
</dbReference>
<dbReference type="SMR" id="Q3SZ25"/>
<dbReference type="FunCoup" id="Q3SZ25">
    <property type="interactions" value="3547"/>
</dbReference>
<dbReference type="STRING" id="9913.ENSBTAP00000010324"/>
<dbReference type="PaxDb" id="9913-ENSBTAP00000010324"/>
<dbReference type="GeneID" id="404183"/>
<dbReference type="KEGG" id="bta:404183"/>
<dbReference type="CTD" id="8726"/>
<dbReference type="VEuPathDB" id="HostDB:ENSBTAG00000007847"/>
<dbReference type="eggNOG" id="KOG1034">
    <property type="taxonomic scope" value="Eukaryota"/>
</dbReference>
<dbReference type="HOGENOM" id="CLU_032683_1_0_1"/>
<dbReference type="InParanoid" id="Q3SZ25"/>
<dbReference type="OMA" id="RDVHRNY"/>
<dbReference type="OrthoDB" id="7318948at2759"/>
<dbReference type="TreeFam" id="TF314451"/>
<dbReference type="Reactome" id="R-BTA-212300">
    <property type="pathway name" value="PRC2 methylates histones and DNA"/>
</dbReference>
<dbReference type="Reactome" id="R-BTA-2559580">
    <property type="pathway name" value="Oxidative Stress Induced Senescence"/>
</dbReference>
<dbReference type="Reactome" id="R-BTA-3214841">
    <property type="pathway name" value="PKMTs methylate histone lysines"/>
</dbReference>
<dbReference type="Reactome" id="R-BTA-8953750">
    <property type="pathway name" value="Transcriptional Regulation by E2F6"/>
</dbReference>
<dbReference type="Proteomes" id="UP000009136">
    <property type="component" value="Chromosome 29"/>
</dbReference>
<dbReference type="Bgee" id="ENSBTAG00000007847">
    <property type="expression patterns" value="Expressed in pharyngeal tonsil and 108 other cell types or tissues"/>
</dbReference>
<dbReference type="GO" id="GO:0035098">
    <property type="term" value="C:ESC/E(Z) complex"/>
    <property type="evidence" value="ECO:0000250"/>
    <property type="project" value="UniProtKB"/>
</dbReference>
<dbReference type="GO" id="GO:0008047">
    <property type="term" value="F:enzyme activator activity"/>
    <property type="evidence" value="ECO:0000250"/>
    <property type="project" value="UniProtKB"/>
</dbReference>
<dbReference type="GO" id="GO:0031507">
    <property type="term" value="P:heterochromatin formation"/>
    <property type="evidence" value="ECO:0000318"/>
    <property type="project" value="GO_Central"/>
</dbReference>
<dbReference type="GO" id="GO:0000122">
    <property type="term" value="P:negative regulation of transcription by RNA polymerase II"/>
    <property type="evidence" value="ECO:0000318"/>
    <property type="project" value="GO_Central"/>
</dbReference>
<dbReference type="FunFam" id="2.130.10.10:FF:000056">
    <property type="entry name" value="Polycomb protein eed"/>
    <property type="match status" value="1"/>
</dbReference>
<dbReference type="Gene3D" id="2.130.10.10">
    <property type="entry name" value="YVTN repeat-like/Quinoprotein amine dehydrogenase"/>
    <property type="match status" value="1"/>
</dbReference>
<dbReference type="InterPro" id="IPR051243">
    <property type="entry name" value="PcG_WD-repeat"/>
</dbReference>
<dbReference type="InterPro" id="IPR015943">
    <property type="entry name" value="WD40/YVTN_repeat-like_dom_sf"/>
</dbReference>
<dbReference type="InterPro" id="IPR019775">
    <property type="entry name" value="WD40_repeat_CS"/>
</dbReference>
<dbReference type="InterPro" id="IPR036322">
    <property type="entry name" value="WD40_repeat_dom_sf"/>
</dbReference>
<dbReference type="InterPro" id="IPR001680">
    <property type="entry name" value="WD40_rpt"/>
</dbReference>
<dbReference type="PANTHER" id="PTHR10253">
    <property type="entry name" value="POLYCOMB PROTEIN"/>
    <property type="match status" value="1"/>
</dbReference>
<dbReference type="Pfam" id="PF00400">
    <property type="entry name" value="WD40"/>
    <property type="match status" value="3"/>
</dbReference>
<dbReference type="SMART" id="SM00320">
    <property type="entry name" value="WD40"/>
    <property type="match status" value="6"/>
</dbReference>
<dbReference type="SUPFAM" id="SSF50978">
    <property type="entry name" value="WD40 repeat-like"/>
    <property type="match status" value="1"/>
</dbReference>
<dbReference type="PROSITE" id="PS00678">
    <property type="entry name" value="WD_REPEATS_1"/>
    <property type="match status" value="1"/>
</dbReference>
<dbReference type="PROSITE" id="PS50082">
    <property type="entry name" value="WD_REPEATS_2"/>
    <property type="match status" value="2"/>
</dbReference>
<dbReference type="PROSITE" id="PS50294">
    <property type="entry name" value="WD_REPEATS_REGION"/>
    <property type="match status" value="1"/>
</dbReference>
<gene>
    <name type="primary">EED</name>
</gene>
<accession>Q3SZ25</accession>
<feature type="initiator methionine" description="Removed" evidence="2">
    <location>
        <position position="1"/>
    </location>
</feature>
<feature type="chain" id="PRO_0000343724" description="Polycomb protein EED">
    <location>
        <begin position="2"/>
        <end position="441"/>
    </location>
</feature>
<feature type="repeat" description="WD 1">
    <location>
        <begin position="91"/>
        <end position="134"/>
    </location>
</feature>
<feature type="repeat" description="WD 2">
    <location>
        <begin position="142"/>
        <end position="185"/>
    </location>
</feature>
<feature type="repeat" description="WD 3">
    <location>
        <begin position="188"/>
        <end position="228"/>
    </location>
</feature>
<feature type="repeat" description="WD 4">
    <location>
        <begin position="234"/>
        <end position="275"/>
    </location>
</feature>
<feature type="repeat" description="WD 5">
    <location>
        <begin position="304"/>
        <end position="341"/>
    </location>
</feature>
<feature type="repeat" description="WD 6">
    <location>
        <begin position="359"/>
        <end position="399"/>
    </location>
</feature>
<feature type="repeat" description="WD 7">
    <location>
        <begin position="408"/>
        <end position="441"/>
    </location>
</feature>
<feature type="region of interest" description="Disordered" evidence="4">
    <location>
        <begin position="1"/>
        <end position="72"/>
    </location>
</feature>
<feature type="region of interest" description="Interaction with EZH2" evidence="1">
    <location>
        <begin position="81"/>
        <end position="441"/>
    </location>
</feature>
<feature type="compositionally biased region" description="Polar residues" evidence="4">
    <location>
        <begin position="45"/>
        <end position="61"/>
    </location>
</feature>
<feature type="modified residue" description="N-acetylserine" evidence="2">
    <location>
        <position position="2"/>
    </location>
</feature>
<feature type="modified residue" description="Phosphoserine" evidence="2">
    <location>
        <position position="2"/>
    </location>
</feature>
<feature type="modified residue" description="Phosphoserine" evidence="3">
    <location>
        <position position="34"/>
    </location>
</feature>
<feature type="modified residue" description="Phosphothreonine" evidence="2">
    <location>
        <position position="55"/>
    </location>
</feature>
<feature type="modified residue" description="N6,N6,N6-trimethyllysine; alternate" evidence="2">
    <location>
        <position position="66"/>
    </location>
</feature>
<feature type="modified residue" description="N6,N6-dimethyllysine; alternate" evidence="2">
    <location>
        <position position="66"/>
    </location>
</feature>
<feature type="modified residue" description="N6-methyllysine; alternate" evidence="2">
    <location>
        <position position="66"/>
    </location>
</feature>
<feature type="modified residue" description="N6,N6,N6-trimethyllysine; alternate" evidence="2">
    <location>
        <position position="197"/>
    </location>
</feature>
<feature type="modified residue" description="N6,N6-dimethyllysine; alternate" evidence="2">
    <location>
        <position position="197"/>
    </location>
</feature>
<feature type="modified residue" description="N6-methyllysine; alternate" evidence="2">
    <location>
        <position position="197"/>
    </location>
</feature>
<feature type="modified residue" description="N6,N6,N6-trimethyllysine; alternate" evidence="2">
    <location>
        <position position="268"/>
    </location>
</feature>
<feature type="modified residue" description="N6,N6-dimethyllysine; alternate" evidence="2">
    <location>
        <position position="268"/>
    </location>
</feature>
<feature type="modified residue" description="N6-methyllysine; alternate" evidence="2">
    <location>
        <position position="268"/>
    </location>
</feature>
<feature type="modified residue" description="N6,N6,N6-trimethyllysine; alternate" evidence="2">
    <location>
        <position position="284"/>
    </location>
</feature>
<feature type="modified residue" description="N6,N6-dimethyllysine; alternate" evidence="2">
    <location>
        <position position="284"/>
    </location>
</feature>
<feature type="modified residue" description="N6-methyllysine; alternate" evidence="2">
    <location>
        <position position="284"/>
    </location>
</feature>
<proteinExistence type="evidence at transcript level"/>
<protein>
    <recommendedName>
        <fullName>Polycomb protein EED</fullName>
    </recommendedName>
</protein>
<keyword id="KW-0007">Acetylation</keyword>
<keyword id="KW-0156">Chromatin regulator</keyword>
<keyword id="KW-0488">Methylation</keyword>
<keyword id="KW-0539">Nucleus</keyword>
<keyword id="KW-0597">Phosphoprotein</keyword>
<keyword id="KW-1185">Reference proteome</keyword>
<keyword id="KW-0677">Repeat</keyword>
<keyword id="KW-0678">Repressor</keyword>
<keyword id="KW-0804">Transcription</keyword>
<keyword id="KW-0805">Transcription regulation</keyword>
<keyword id="KW-0853">WD repeat</keyword>
<evidence type="ECO:0000250" key="1"/>
<evidence type="ECO:0000250" key="2">
    <source>
        <dbReference type="UniProtKB" id="O75530"/>
    </source>
</evidence>
<evidence type="ECO:0000250" key="3">
    <source>
        <dbReference type="UniProtKB" id="Q921E6"/>
    </source>
</evidence>
<evidence type="ECO:0000256" key="4">
    <source>
        <dbReference type="SAM" id="MobiDB-lite"/>
    </source>
</evidence>
<evidence type="ECO:0000305" key="5"/>
<sequence length="441" mass="50226">MSEREVSTVPAGTDMPAAKKQKLSSDENSNPDLSGDENDDAVSIESGTNTERPDTPTNTPNAPGRKSWGKGKWKSKKCKYSFKCVNSLKEDHNQPLFGVQFNWHSKEGDPLVFATVGSNRVTLYECHSQGEIRLLQSYVDADADENFYTCAWTYDSNTSHPLLAVAGSRGIIRIINPITMQCIKHYVGHGNAINELKFHPRDPNLLLSVSKDHALRLWNIQTDTLVAIFGGVEGHRDEVLSADYDLLGEKIMSCGMDHSLKLWRINSKRMMNAIKESYDYNPNKTNRPFISQKIHFPDFSTRDIHRNYVDCVRWLGDLILSKSCENAIVCWKPGKMEDDIDKIKPSESNVTILGRFDYSQCDIWYMRFSMDFWQKMLALGNQVGKLYVWDLEVEDPHKAKCTTLTHHKCGAAIRQTSFSRDSSILIAVCDDASIWRWDRLR</sequence>
<reference key="1">
    <citation type="submission" date="2005-08" db="EMBL/GenBank/DDBJ databases">
        <authorList>
            <consortium name="NIH - Mammalian Gene Collection (MGC) project"/>
        </authorList>
    </citation>
    <scope>NUCLEOTIDE SEQUENCE [LARGE SCALE MRNA]</scope>
    <source>
        <strain>Hereford</strain>
        <tissue>Hypothalamus</tissue>
    </source>
</reference>
<organism>
    <name type="scientific">Bos taurus</name>
    <name type="common">Bovine</name>
    <dbReference type="NCBI Taxonomy" id="9913"/>
    <lineage>
        <taxon>Eukaryota</taxon>
        <taxon>Metazoa</taxon>
        <taxon>Chordata</taxon>
        <taxon>Craniata</taxon>
        <taxon>Vertebrata</taxon>
        <taxon>Euteleostomi</taxon>
        <taxon>Mammalia</taxon>
        <taxon>Eutheria</taxon>
        <taxon>Laurasiatheria</taxon>
        <taxon>Artiodactyla</taxon>
        <taxon>Ruminantia</taxon>
        <taxon>Pecora</taxon>
        <taxon>Bovidae</taxon>
        <taxon>Bovinae</taxon>
        <taxon>Bos</taxon>
    </lineage>
</organism>